<dbReference type="EC" id="3.1.3.5" evidence="1"/>
<dbReference type="EMBL" id="CP000027">
    <property type="protein sequence ID" value="AAW39890.1"/>
    <property type="molecule type" value="Genomic_DNA"/>
</dbReference>
<dbReference type="RefSeq" id="WP_010936530.1">
    <property type="nucleotide sequence ID" value="NC_002936.3"/>
</dbReference>
<dbReference type="SMR" id="Q3Z8C0"/>
<dbReference type="STRING" id="243164.DET0797"/>
<dbReference type="GeneID" id="3229852"/>
<dbReference type="KEGG" id="det:DET0797"/>
<dbReference type="PATRIC" id="fig|243164.10.peg.761"/>
<dbReference type="eggNOG" id="COG0496">
    <property type="taxonomic scope" value="Bacteria"/>
</dbReference>
<dbReference type="HOGENOM" id="CLU_045192_1_3_0"/>
<dbReference type="InParanoid" id="Q3Z8C0"/>
<dbReference type="Proteomes" id="UP000008289">
    <property type="component" value="Chromosome"/>
</dbReference>
<dbReference type="GO" id="GO:0005737">
    <property type="term" value="C:cytoplasm"/>
    <property type="evidence" value="ECO:0007669"/>
    <property type="project" value="UniProtKB-SubCell"/>
</dbReference>
<dbReference type="GO" id="GO:0008253">
    <property type="term" value="F:5'-nucleotidase activity"/>
    <property type="evidence" value="ECO:0007669"/>
    <property type="project" value="UniProtKB-UniRule"/>
</dbReference>
<dbReference type="GO" id="GO:0046872">
    <property type="term" value="F:metal ion binding"/>
    <property type="evidence" value="ECO:0007669"/>
    <property type="project" value="UniProtKB-UniRule"/>
</dbReference>
<dbReference type="GO" id="GO:0000166">
    <property type="term" value="F:nucleotide binding"/>
    <property type="evidence" value="ECO:0007669"/>
    <property type="project" value="UniProtKB-KW"/>
</dbReference>
<dbReference type="Gene3D" id="3.40.1210.10">
    <property type="entry name" value="Survival protein SurE-like phosphatase/nucleotidase"/>
    <property type="match status" value="1"/>
</dbReference>
<dbReference type="HAMAP" id="MF_00060">
    <property type="entry name" value="SurE"/>
    <property type="match status" value="1"/>
</dbReference>
<dbReference type="InterPro" id="IPR030048">
    <property type="entry name" value="SurE"/>
</dbReference>
<dbReference type="InterPro" id="IPR002828">
    <property type="entry name" value="SurE-like_Pase/nucleotidase"/>
</dbReference>
<dbReference type="InterPro" id="IPR036523">
    <property type="entry name" value="SurE-like_sf"/>
</dbReference>
<dbReference type="NCBIfam" id="NF001490">
    <property type="entry name" value="PRK00346.1-4"/>
    <property type="match status" value="1"/>
</dbReference>
<dbReference type="NCBIfam" id="TIGR00087">
    <property type="entry name" value="surE"/>
    <property type="match status" value="1"/>
</dbReference>
<dbReference type="PANTHER" id="PTHR30457">
    <property type="entry name" value="5'-NUCLEOTIDASE SURE"/>
    <property type="match status" value="1"/>
</dbReference>
<dbReference type="PANTHER" id="PTHR30457:SF0">
    <property type="entry name" value="PHOSPHATASE, PUTATIVE (AFU_ORTHOLOGUE AFUA_4G01070)-RELATED"/>
    <property type="match status" value="1"/>
</dbReference>
<dbReference type="Pfam" id="PF01975">
    <property type="entry name" value="SurE"/>
    <property type="match status" value="1"/>
</dbReference>
<dbReference type="SUPFAM" id="SSF64167">
    <property type="entry name" value="SurE-like"/>
    <property type="match status" value="1"/>
</dbReference>
<reference key="1">
    <citation type="journal article" date="2005" name="Science">
        <title>Genome sequence of the PCE-dechlorinating bacterium Dehalococcoides ethenogenes.</title>
        <authorList>
            <person name="Seshadri R."/>
            <person name="Adrian L."/>
            <person name="Fouts D.E."/>
            <person name="Eisen J.A."/>
            <person name="Phillippy A.M."/>
            <person name="Methe B.A."/>
            <person name="Ward N.L."/>
            <person name="Nelson W.C."/>
            <person name="DeBoy R.T."/>
            <person name="Khouri H.M."/>
            <person name="Kolonay J.F."/>
            <person name="Dodson R.J."/>
            <person name="Daugherty S.C."/>
            <person name="Brinkac L.M."/>
            <person name="Sullivan S.A."/>
            <person name="Madupu R."/>
            <person name="Nelson K.E."/>
            <person name="Kang K.H."/>
            <person name="Impraim M."/>
            <person name="Tran K."/>
            <person name="Robinson J.M."/>
            <person name="Forberger H.A."/>
            <person name="Fraser C.M."/>
            <person name="Zinder S.H."/>
            <person name="Heidelberg J.F."/>
        </authorList>
    </citation>
    <scope>NUCLEOTIDE SEQUENCE [LARGE SCALE GENOMIC DNA]</scope>
    <source>
        <strain>ATCC BAA-2266 / KCTC 15142 / 195</strain>
    </source>
</reference>
<accession>Q3Z8C0</accession>
<name>SURE_DEHM1</name>
<gene>
    <name evidence="1" type="primary">surE</name>
    <name type="ordered locus">DET0797</name>
</gene>
<protein>
    <recommendedName>
        <fullName evidence="1">5'-nucleotidase SurE</fullName>
        <ecNumber evidence="1">3.1.3.5</ecNumber>
    </recommendedName>
    <alternativeName>
        <fullName evidence="1">Nucleoside 5'-monophosphate phosphohydrolase</fullName>
    </alternativeName>
</protein>
<comment type="function">
    <text evidence="1">Nucleotidase that shows phosphatase activity on nucleoside 5'-monophosphates.</text>
</comment>
<comment type="catalytic activity">
    <reaction evidence="1">
        <text>a ribonucleoside 5'-phosphate + H2O = a ribonucleoside + phosphate</text>
        <dbReference type="Rhea" id="RHEA:12484"/>
        <dbReference type="ChEBI" id="CHEBI:15377"/>
        <dbReference type="ChEBI" id="CHEBI:18254"/>
        <dbReference type="ChEBI" id="CHEBI:43474"/>
        <dbReference type="ChEBI" id="CHEBI:58043"/>
        <dbReference type="EC" id="3.1.3.5"/>
    </reaction>
</comment>
<comment type="cofactor">
    <cofactor evidence="1">
        <name>a divalent metal cation</name>
        <dbReference type="ChEBI" id="CHEBI:60240"/>
    </cofactor>
    <text evidence="1">Binds 1 divalent metal cation per subunit.</text>
</comment>
<comment type="subcellular location">
    <subcellularLocation>
        <location evidence="1">Cytoplasm</location>
    </subcellularLocation>
</comment>
<comment type="similarity">
    <text evidence="1">Belongs to the SurE nucleotidase family.</text>
</comment>
<proteinExistence type="inferred from homology"/>
<evidence type="ECO:0000255" key="1">
    <source>
        <dbReference type="HAMAP-Rule" id="MF_00060"/>
    </source>
</evidence>
<keyword id="KW-0963">Cytoplasm</keyword>
<keyword id="KW-0378">Hydrolase</keyword>
<keyword id="KW-0479">Metal-binding</keyword>
<keyword id="KW-0547">Nucleotide-binding</keyword>
<sequence>MRILVSNDDGIYSSGLWALVKRLKEVGEVVVVAPDREQSATGTQVTLRQPLRVQKTHPLIPGIEAYSVEGSPCDCVIMGLAKLITEPVDLVVSGINHGLNLGDDVLISGTVGAALQGYLRNIPSIAISIPVTAEEPENLDSAACITAEIARRIQSGHISKNSFLNINTPDLPLCRINELRVTPLAHKTHIETVEEGHDGRKRYFWLRRRQLSPADNNETDIWAVENGLISISALHERLFQQPPFMLEDTETAGILASARALQDII</sequence>
<organism>
    <name type="scientific">Dehalococcoides mccartyi (strain ATCC BAA-2266 / KCTC 15142 / 195)</name>
    <name type="common">Dehalococcoides ethenogenes (strain 195)</name>
    <dbReference type="NCBI Taxonomy" id="243164"/>
    <lineage>
        <taxon>Bacteria</taxon>
        <taxon>Bacillati</taxon>
        <taxon>Chloroflexota</taxon>
        <taxon>Dehalococcoidia</taxon>
        <taxon>Dehalococcoidales</taxon>
        <taxon>Dehalococcoidaceae</taxon>
        <taxon>Dehalococcoides</taxon>
    </lineage>
</organism>
<feature type="chain" id="PRO_0000235609" description="5'-nucleotidase SurE">
    <location>
        <begin position="1"/>
        <end position="265"/>
    </location>
</feature>
<feature type="binding site" evidence="1">
    <location>
        <position position="8"/>
    </location>
    <ligand>
        <name>a divalent metal cation</name>
        <dbReference type="ChEBI" id="CHEBI:60240"/>
    </ligand>
</feature>
<feature type="binding site" evidence="1">
    <location>
        <position position="9"/>
    </location>
    <ligand>
        <name>a divalent metal cation</name>
        <dbReference type="ChEBI" id="CHEBI:60240"/>
    </ligand>
</feature>
<feature type="binding site" evidence="1">
    <location>
        <position position="39"/>
    </location>
    <ligand>
        <name>a divalent metal cation</name>
        <dbReference type="ChEBI" id="CHEBI:60240"/>
    </ligand>
</feature>
<feature type="binding site" evidence="1">
    <location>
        <position position="96"/>
    </location>
    <ligand>
        <name>a divalent metal cation</name>
        <dbReference type="ChEBI" id="CHEBI:60240"/>
    </ligand>
</feature>